<proteinExistence type="inferred from homology"/>
<accession>Q9PHX2</accession>
<accession>Q0PAX4</accession>
<dbReference type="EC" id="1.2.1.70" evidence="1"/>
<dbReference type="EMBL" id="AL111168">
    <property type="protein sequence ID" value="CAL34688.1"/>
    <property type="molecule type" value="Genomic_DNA"/>
</dbReference>
<dbReference type="PIR" id="F81400">
    <property type="entry name" value="F81400"/>
</dbReference>
<dbReference type="RefSeq" id="WP_002878972.1">
    <property type="nucleotide sequence ID" value="NZ_SZUC01000002.1"/>
</dbReference>
<dbReference type="RefSeq" id="YP_002343973.1">
    <property type="nucleotide sequence ID" value="NC_002163.1"/>
</dbReference>
<dbReference type="SMR" id="Q9PHX2"/>
<dbReference type="IntAct" id="Q9PHX2">
    <property type="interactions" value="80"/>
</dbReference>
<dbReference type="STRING" id="192222.Cj0542"/>
<dbReference type="PaxDb" id="192222-Cj0542"/>
<dbReference type="EnsemblBacteria" id="CAL34688">
    <property type="protein sequence ID" value="CAL34688"/>
    <property type="gene ID" value="Cj0542"/>
</dbReference>
<dbReference type="GeneID" id="904868"/>
<dbReference type="KEGG" id="cje:Cj0542"/>
<dbReference type="PATRIC" id="fig|192222.6.peg.534"/>
<dbReference type="eggNOG" id="COG0373">
    <property type="taxonomic scope" value="Bacteria"/>
</dbReference>
<dbReference type="HOGENOM" id="CLU_035113_2_2_7"/>
<dbReference type="OrthoDB" id="110209at2"/>
<dbReference type="UniPathway" id="UPA00251">
    <property type="reaction ID" value="UER00316"/>
</dbReference>
<dbReference type="Proteomes" id="UP000000799">
    <property type="component" value="Chromosome"/>
</dbReference>
<dbReference type="GO" id="GO:0008883">
    <property type="term" value="F:glutamyl-tRNA reductase activity"/>
    <property type="evidence" value="ECO:0007669"/>
    <property type="project" value="UniProtKB-UniRule"/>
</dbReference>
<dbReference type="GO" id="GO:0050661">
    <property type="term" value="F:NADP binding"/>
    <property type="evidence" value="ECO:0007669"/>
    <property type="project" value="InterPro"/>
</dbReference>
<dbReference type="GO" id="GO:0019353">
    <property type="term" value="P:protoporphyrinogen IX biosynthetic process from glutamate"/>
    <property type="evidence" value="ECO:0007669"/>
    <property type="project" value="TreeGrafter"/>
</dbReference>
<dbReference type="CDD" id="cd05213">
    <property type="entry name" value="NAD_bind_Glutamyl_tRNA_reduct"/>
    <property type="match status" value="1"/>
</dbReference>
<dbReference type="FunFam" id="3.30.460.30:FF:000001">
    <property type="entry name" value="Glutamyl-tRNA reductase"/>
    <property type="match status" value="1"/>
</dbReference>
<dbReference type="Gene3D" id="3.30.460.30">
    <property type="entry name" value="Glutamyl-tRNA reductase, N-terminal domain"/>
    <property type="match status" value="1"/>
</dbReference>
<dbReference type="Gene3D" id="3.40.50.720">
    <property type="entry name" value="NAD(P)-binding Rossmann-like Domain"/>
    <property type="match status" value="1"/>
</dbReference>
<dbReference type="HAMAP" id="MF_00087">
    <property type="entry name" value="Glu_tRNA_reductase"/>
    <property type="match status" value="1"/>
</dbReference>
<dbReference type="InterPro" id="IPR000343">
    <property type="entry name" value="4pyrrol_synth_GluRdtase"/>
</dbReference>
<dbReference type="InterPro" id="IPR015896">
    <property type="entry name" value="4pyrrol_synth_GluRdtase_dimer"/>
</dbReference>
<dbReference type="InterPro" id="IPR015895">
    <property type="entry name" value="4pyrrol_synth_GluRdtase_N"/>
</dbReference>
<dbReference type="InterPro" id="IPR018214">
    <property type="entry name" value="GluRdtase_CS"/>
</dbReference>
<dbReference type="InterPro" id="IPR036453">
    <property type="entry name" value="GluRdtase_dimer_dom_sf"/>
</dbReference>
<dbReference type="InterPro" id="IPR036343">
    <property type="entry name" value="GluRdtase_N_sf"/>
</dbReference>
<dbReference type="InterPro" id="IPR036291">
    <property type="entry name" value="NAD(P)-bd_dom_sf"/>
</dbReference>
<dbReference type="InterPro" id="IPR006151">
    <property type="entry name" value="Shikm_DH/Glu-tRNA_Rdtase"/>
</dbReference>
<dbReference type="NCBIfam" id="TIGR01035">
    <property type="entry name" value="hemA"/>
    <property type="match status" value="1"/>
</dbReference>
<dbReference type="PANTHER" id="PTHR43013">
    <property type="entry name" value="GLUTAMYL-TRNA REDUCTASE"/>
    <property type="match status" value="1"/>
</dbReference>
<dbReference type="PANTHER" id="PTHR43013:SF1">
    <property type="entry name" value="GLUTAMYL-TRNA REDUCTASE"/>
    <property type="match status" value="1"/>
</dbReference>
<dbReference type="Pfam" id="PF00745">
    <property type="entry name" value="GlutR_dimer"/>
    <property type="match status" value="1"/>
</dbReference>
<dbReference type="Pfam" id="PF05201">
    <property type="entry name" value="GlutR_N"/>
    <property type="match status" value="1"/>
</dbReference>
<dbReference type="Pfam" id="PF01488">
    <property type="entry name" value="Shikimate_DH"/>
    <property type="match status" value="1"/>
</dbReference>
<dbReference type="PIRSF" id="PIRSF000445">
    <property type="entry name" value="4pyrrol_synth_GluRdtase"/>
    <property type="match status" value="1"/>
</dbReference>
<dbReference type="SUPFAM" id="SSF69742">
    <property type="entry name" value="Glutamyl tRNA-reductase catalytic, N-terminal domain"/>
    <property type="match status" value="1"/>
</dbReference>
<dbReference type="SUPFAM" id="SSF69075">
    <property type="entry name" value="Glutamyl tRNA-reductase dimerization domain"/>
    <property type="match status" value="1"/>
</dbReference>
<dbReference type="SUPFAM" id="SSF51735">
    <property type="entry name" value="NAD(P)-binding Rossmann-fold domains"/>
    <property type="match status" value="1"/>
</dbReference>
<dbReference type="PROSITE" id="PS00747">
    <property type="entry name" value="GLUTR"/>
    <property type="match status" value="1"/>
</dbReference>
<comment type="function">
    <text evidence="1">Catalyzes the NADPH-dependent reduction of glutamyl-tRNA(Glu) to glutamate 1-semialdehyde (GSA).</text>
</comment>
<comment type="catalytic activity">
    <reaction evidence="1">
        <text>(S)-4-amino-5-oxopentanoate + tRNA(Glu) + NADP(+) = L-glutamyl-tRNA(Glu) + NADPH + H(+)</text>
        <dbReference type="Rhea" id="RHEA:12344"/>
        <dbReference type="Rhea" id="RHEA-COMP:9663"/>
        <dbReference type="Rhea" id="RHEA-COMP:9680"/>
        <dbReference type="ChEBI" id="CHEBI:15378"/>
        <dbReference type="ChEBI" id="CHEBI:57501"/>
        <dbReference type="ChEBI" id="CHEBI:57783"/>
        <dbReference type="ChEBI" id="CHEBI:58349"/>
        <dbReference type="ChEBI" id="CHEBI:78442"/>
        <dbReference type="ChEBI" id="CHEBI:78520"/>
        <dbReference type="EC" id="1.2.1.70"/>
    </reaction>
</comment>
<comment type="pathway">
    <text evidence="1">Porphyrin-containing compound metabolism; protoporphyrin-IX biosynthesis; 5-aminolevulinate from L-glutamyl-tRNA(Glu): step 1/2.</text>
</comment>
<comment type="subunit">
    <text evidence="1">Homodimer.</text>
</comment>
<comment type="domain">
    <text evidence="1">Possesses an unusual extended V-shaped dimeric structure with each monomer consisting of three distinct domains arranged along a curved 'spinal' alpha-helix. The N-terminal catalytic domain specifically recognizes the glutamate moiety of the substrate. The second domain is the NADPH-binding domain, and the third C-terminal domain is responsible for dimerization.</text>
</comment>
<comment type="miscellaneous">
    <text evidence="1">During catalysis, the active site Cys acts as a nucleophile attacking the alpha-carbonyl group of tRNA-bound glutamate with the formation of a thioester intermediate between enzyme and glutamate, and the concomitant release of tRNA(Glu). The thioester intermediate is finally reduced by direct hydride transfer from NADPH, to form the product GSA.</text>
</comment>
<comment type="similarity">
    <text evidence="1">Belongs to the glutamyl-tRNA reductase family.</text>
</comment>
<evidence type="ECO:0000255" key="1">
    <source>
        <dbReference type="HAMAP-Rule" id="MF_00087"/>
    </source>
</evidence>
<feature type="chain" id="PRO_0000114002" description="Glutamyl-tRNA reductase">
    <location>
        <begin position="1"/>
        <end position="432"/>
    </location>
</feature>
<feature type="active site" description="Nucleophile" evidence="1">
    <location>
        <position position="50"/>
    </location>
</feature>
<feature type="binding site" evidence="1">
    <location>
        <begin position="49"/>
        <end position="52"/>
    </location>
    <ligand>
        <name>substrate</name>
    </ligand>
</feature>
<feature type="binding site" evidence="1">
    <location>
        <position position="107"/>
    </location>
    <ligand>
        <name>substrate</name>
    </ligand>
</feature>
<feature type="binding site" evidence="1">
    <location>
        <begin position="112"/>
        <end position="114"/>
    </location>
    <ligand>
        <name>substrate</name>
    </ligand>
</feature>
<feature type="binding site" evidence="1">
    <location>
        <position position="118"/>
    </location>
    <ligand>
        <name>substrate</name>
    </ligand>
</feature>
<feature type="binding site" evidence="1">
    <location>
        <begin position="186"/>
        <end position="191"/>
    </location>
    <ligand>
        <name>NADP(+)</name>
        <dbReference type="ChEBI" id="CHEBI:58349"/>
    </ligand>
</feature>
<feature type="site" description="Important for activity" evidence="1">
    <location>
        <position position="97"/>
    </location>
</feature>
<reference key="1">
    <citation type="journal article" date="2000" name="Nature">
        <title>The genome sequence of the food-borne pathogen Campylobacter jejuni reveals hypervariable sequences.</title>
        <authorList>
            <person name="Parkhill J."/>
            <person name="Wren B.W."/>
            <person name="Mungall K.L."/>
            <person name="Ketley J.M."/>
            <person name="Churcher C.M."/>
            <person name="Basham D."/>
            <person name="Chillingworth T."/>
            <person name="Davies R.M."/>
            <person name="Feltwell T."/>
            <person name="Holroyd S."/>
            <person name="Jagels K."/>
            <person name="Karlyshev A.V."/>
            <person name="Moule S."/>
            <person name="Pallen M.J."/>
            <person name="Penn C.W."/>
            <person name="Quail M.A."/>
            <person name="Rajandream M.A."/>
            <person name="Rutherford K.M."/>
            <person name="van Vliet A.H.M."/>
            <person name="Whitehead S."/>
            <person name="Barrell B.G."/>
        </authorList>
    </citation>
    <scope>NUCLEOTIDE SEQUENCE [LARGE SCALE GENOMIC DNA]</scope>
    <source>
        <strain>ATCC 700819 / NCTC 11168</strain>
    </source>
</reference>
<name>HEM1_CAMJE</name>
<protein>
    <recommendedName>
        <fullName evidence="1">Glutamyl-tRNA reductase</fullName>
        <shortName evidence="1">GluTR</shortName>
        <ecNumber evidence="1">1.2.1.70</ecNumber>
    </recommendedName>
</protein>
<organism>
    <name type="scientific">Campylobacter jejuni subsp. jejuni serotype O:2 (strain ATCC 700819 / NCTC 11168)</name>
    <dbReference type="NCBI Taxonomy" id="192222"/>
    <lineage>
        <taxon>Bacteria</taxon>
        <taxon>Pseudomonadati</taxon>
        <taxon>Campylobacterota</taxon>
        <taxon>Epsilonproteobacteria</taxon>
        <taxon>Campylobacterales</taxon>
        <taxon>Campylobacteraceae</taxon>
        <taxon>Campylobacter</taxon>
    </lineage>
</organism>
<gene>
    <name evidence="1" type="primary">hemA</name>
    <name type="ordered locus">Cj0542</name>
</gene>
<sequence>MYYCISFTHKNTDIALREKLSFSNEAKKGEFLKIISTHENIEECLVISTCNRVEIVAFVKMACAEFIVKSLALLCDVDKDILLEKADIFEDSGAIHHLFSVASSLDSLVVGETQIAGQLKDAFAFAVKNNFCGVHLSRAVHSAFKCAAKVRNETQISKNSISVASVAVAKAKELADLTQKKAVVIGAGEMGELAAKHLIAAGAKVIILNRDLQKAKDLCERLGVLSEYDSLENLKKYLNQYEFFFSATNAPNAIITNSLIEELSYKRYFFDIAVPRDIDINENENISVFAVDDLEIVVQKNLALREQEARMAYGIIGRETSEFFRYLNDLALMPIIKAIRLQAKEYADKQLEIALKKGYLKKSDKEEARKLIHQVFKAFLHTPTVNLKHLQGKMQSDTVINAMRYVFDLQNNLEGLNQYKCEFDMENNDEIY</sequence>
<keyword id="KW-0521">NADP</keyword>
<keyword id="KW-0560">Oxidoreductase</keyword>
<keyword id="KW-0627">Porphyrin biosynthesis</keyword>
<keyword id="KW-1185">Reference proteome</keyword>